<name>SCX2_ANDAU</name>
<proteinExistence type="evidence at protein level"/>
<accession>P01484</accession>
<feature type="signal peptide" evidence="7">
    <location>
        <begin position="1"/>
        <end position="19"/>
    </location>
</feature>
<feature type="chain" id="PRO_0000035220" description="Alpha-mammal toxin AaH2" evidence="7">
    <location>
        <begin position="20"/>
        <end position="83"/>
    </location>
</feature>
<feature type="domain" description="LCN-type CS-alpha/beta" evidence="1">
    <location>
        <begin position="21"/>
        <end position="83"/>
    </location>
</feature>
<feature type="site" description="Key residue for Nav1.7/SCN9A site 3" evidence="6">
    <location>
        <position position="81"/>
    </location>
</feature>
<feature type="site" description="Key residue for Nav1.7/SCN9A site 3" evidence="6">
    <location>
        <position position="83"/>
    </location>
</feature>
<feature type="modified residue" description="Histidine amide" evidence="4">
    <location>
        <position position="83"/>
    </location>
</feature>
<feature type="disulfide bond" evidence="6 8 9 22 23 24 25 26">
    <location>
        <begin position="31"/>
        <end position="82"/>
    </location>
</feature>
<feature type="disulfide bond" evidence="6 8 9 22 23 24 25 26">
    <location>
        <begin position="35"/>
        <end position="55"/>
    </location>
</feature>
<feature type="disulfide bond" evidence="6 8 9 22 23 24 25 26">
    <location>
        <begin position="41"/>
        <end position="65"/>
    </location>
</feature>
<feature type="disulfide bond" evidence="6 8 9 22 23 24 25 26">
    <location>
        <begin position="45"/>
        <end position="67"/>
    </location>
</feature>
<feature type="mutagenesis site" description="In chimera Aah2/Lqh-alpha-IT(27-29,36,75-81); gain of toxicity towards insects, and loss of toxicity towards mammals; when associated with F-36 and 75-P--K-81." evidence="3">
    <original>DDV</original>
    <variation>KNY</variation>
    <location>
        <begin position="27"/>
        <end position="29"/>
    </location>
</feature>
<feature type="mutagenesis site" description="In chimera Aah2/Lqh-alpha-IT(27-29,36,75-81); gain of toxicity towards insects, and loss of toxicity towards mammals; when associated with 27-K--Y-29 and 75-P--K-81." evidence="3">
    <original>G</original>
    <variation>F</variation>
    <location>
        <position position="36"/>
    </location>
</feature>
<feature type="mutagenesis site" description="In chimera Aah2/Lqh-alpha-IT(27-29,36,75-81); gain of toxicity towards insects, and loss of toxicity towards mammals; when associated with 27-K--Y-29 and F-36." evidence="3">
    <original>RTKGPGR</original>
    <variation>PIRVPGK</variation>
    <location>
        <begin position="75"/>
        <end position="81"/>
    </location>
</feature>
<feature type="mutagenesis site" description="Loss of toxin toxicity; tested only without C-terminal amidation." evidence="4">
    <original>K</original>
    <variation>E</variation>
    <variation>I</variation>
    <variation>V</variation>
    <location>
        <position position="77"/>
    </location>
</feature>
<feature type="mutagenesis site" description="Important (80-fold) decrease of inhibitory activity against Nav1.7/SCN9A." evidence="6">
    <original>R</original>
    <variation>A</variation>
    <location>
        <position position="81"/>
    </location>
</feature>
<feature type="mutagenesis site" description="Decrease (4-fold) of inhibitory activity against Nav1.7/SCN9A." evidence="6">
    <original>H</original>
    <variation>A</variation>
    <location>
        <position position="83"/>
    </location>
</feature>
<feature type="mutagenesis site" description="Little loss in toxicity; G-84 is not amidated." evidence="4">
    <original>H</original>
    <variation>HG</variation>
    <location>
        <position position="83"/>
    </location>
</feature>
<feature type="strand" evidence="27">
    <location>
        <begin position="21"/>
        <end position="26"/>
    </location>
</feature>
<feature type="turn" evidence="28">
    <location>
        <begin position="28"/>
        <end position="30"/>
    </location>
</feature>
<feature type="helix" evidence="27">
    <location>
        <begin position="38"/>
        <end position="47"/>
    </location>
</feature>
<feature type="strand" evidence="27">
    <location>
        <begin position="51"/>
        <end position="59"/>
    </location>
</feature>
<feature type="strand" evidence="27">
    <location>
        <begin position="62"/>
        <end position="70"/>
    </location>
</feature>
<comment type="function">
    <text evidence="2 5 6">Alpha toxin that binds voltage-independently at site-3 of sodium channels (Nav), inhibits the inactivation of the activated channels, and weakly inhibits activation, thereby blocking neuronal transmission. Inserts into voltage-sensing domain IV to stabilize a deactivated state, thereby preventing fast-inactivation (PubMed:30733386). Principally slows the inactivation process of TTX-sensitive sodium channels (PubMed:23685008). It is active on mammalian brain Nav1.2/SCN2A (EC(50)human=0.72 nM, EC(50)rat=2.6 nM), on rat skeletal muscle Nav1.4/SCN4A (EC(50)=2.2 nM) (PubMed:12911331), and on human neuronal Nav1.7/SCN9A (EC(50)=6.8-51.7 nM) (PubMed:23685008, PubMed:30733386). In vivo, intraplantar injection into mice induces spontaneous pain responses (PubMed:23685008).</text>
</comment>
<comment type="subcellular location">
    <subcellularLocation>
        <location evidence="7">Secreted</location>
    </subcellularLocation>
</comment>
<comment type="tissue specificity">
    <text evidence="21">Expressed by the venom gland.</text>
</comment>
<comment type="domain">
    <text evidence="20">Has the structural arrangement of an alpha-helix connected to antiparallel beta-sheets by disulfide bonds (CS-alpha/beta).</text>
</comment>
<comment type="PTM">
    <text evidence="4">The amidation of His-83 is not necessary for toxicity.</text>
</comment>
<comment type="mass spectrometry" mass="7243.2" method="Electrospray" evidence="4"/>
<comment type="toxic dose">
    <text evidence="2">LD(50) is 25 ng/kg by intracerebroventricular injection into mice, and LD(50) is 11 ug/kg by subcutaneous injection.</text>
</comment>
<comment type="miscellaneous">
    <text evidence="5">Negative results: does not act on Nav1.8/SCN10A and Nav1.9/SCN11A.</text>
</comment>
<comment type="similarity">
    <text evidence="20">Belongs to the long (4 C-C) scorpion toxin superfamily. Sodium channel inhibitor family. Alpha subfamily.</text>
</comment>
<keyword id="KW-0002">3D-structure</keyword>
<keyword id="KW-0027">Amidation</keyword>
<keyword id="KW-0903">Direct protein sequencing</keyword>
<keyword id="KW-1015">Disulfide bond</keyword>
<keyword id="KW-0872">Ion channel impairing toxin</keyword>
<keyword id="KW-0528">Neurotoxin</keyword>
<keyword id="KW-0964">Secreted</keyword>
<keyword id="KW-0732">Signal</keyword>
<keyword id="KW-0800">Toxin</keyword>
<keyword id="KW-0738">Voltage-gated sodium channel impairing toxin</keyword>
<reference key="1">
    <citation type="journal article" date="1989" name="J. Biol. Chem.">
        <title>Precursors of Androctonus australis scorpion neurotoxins. Structures of precursors, processing outcomes, and expression of a functional recombinant toxin II.</title>
        <authorList>
            <person name="Bougis P.E."/>
            <person name="Rochat H."/>
            <person name="Smith L.A."/>
        </authorList>
    </citation>
    <scope>NUCLEOTIDE SEQUENCE [MRNA]</scope>
    <source>
        <strain>Hector</strain>
        <tissue>Venom gland</tissue>
    </source>
</reference>
<reference key="2">
    <citation type="journal article" date="1972" name="Eur. J. Biochem.">
        <title>The amino-acid sequence of neurotoxin II of Androctonus australis hector.</title>
        <authorList>
            <person name="Rochat H."/>
            <person name="Rochat C."/>
            <person name="Sampieri F."/>
            <person name="Miranda F."/>
            <person name="Lissitzky S."/>
        </authorList>
    </citation>
    <scope>PROTEIN SEQUENCE OF 20-83</scope>
    <scope>SUBCELLULAR LOCATION</scope>
    <source>
        <strain>Hector</strain>
        <tissue>Venom</tissue>
    </source>
</reference>
<reference key="3">
    <citation type="journal article" date="1974" name="Eur. J. Biochem.">
        <title>Disulfide bonds of toxin II of the scorpion Androctonus australis hector.</title>
        <authorList>
            <person name="Kopeyan C."/>
            <person name="Martinez G."/>
            <person name="Lissitzky S."/>
            <person name="Miranda F."/>
            <person name="Rochat H."/>
        </authorList>
    </citation>
    <scope>DISULFIDE BONDS</scope>
    <source>
        <strain>Hector</strain>
    </source>
</reference>
<reference key="4">
    <citation type="journal article" date="2003" name="Biochem. J.">
        <title>Characterization of Amm VIII from Androctonus mauretanicus mauretanicus: a new scorpion toxin that discriminates between neuronal and skeletal sodium channels.</title>
        <authorList>
            <person name="Alami M."/>
            <person name="Vacher H."/>
            <person name="Bosmans F."/>
            <person name="Devaux C."/>
            <person name="Rosso J.-P."/>
            <person name="Bougis P.E."/>
            <person name="Tytgat J."/>
            <person name="Darbon H."/>
            <person name="Martin-Eauclaire M.-F."/>
        </authorList>
    </citation>
    <scope>FUNCTION</scope>
    <scope>TOXIC DOSE</scope>
    <source>
        <tissue>Venom</tissue>
    </source>
</reference>
<reference key="5">
    <citation type="journal article" date="2005" name="Biochim. Biophys. Acta">
        <title>Expression of the standard scorpion alpha-toxin AaH II and AaH II mutants leading to the identification of some key bioactive elements.</title>
        <authorList>
            <person name="Legros C."/>
            <person name="Ceard B."/>
            <person name="Vacher H."/>
            <person name="Marchot P."/>
            <person name="Bougis P.E."/>
            <person name="Martin-Eauclaire M.-F."/>
        </authorList>
    </citation>
    <scope>MUTAGENESIS OF LYS-77 AND HIS-83</scope>
    <scope>AMIDATION AT HIS-83</scope>
    <scope>MASS SPECTROMETRY</scope>
</reference>
<reference key="6">
    <citation type="journal article" date="2013" name="Pain">
        <title>The scorpion toxin Amm VIII induces pain hypersensitivity through gain-of-function of TTX-sensitive Na[+] channels.</title>
        <authorList>
            <person name="Abbas N."/>
            <person name="Gaudioso-Tyzra C."/>
            <person name="Bonnet C."/>
            <person name="Gabriac M."/>
            <person name="Amsalem M."/>
            <person name="Lonigro A."/>
            <person name="Padilla F."/>
            <person name="Crest M."/>
            <person name="Martin-Eauclaire M.F."/>
            <person name="Delmas P."/>
        </authorList>
    </citation>
    <scope>FUNCTION</scope>
</reference>
<reference key="7">
    <citation type="journal article" date="1988" name="Proc. Natl. Acad. Sci. U.S.A.">
        <title>Orthorhombic crystals and three-dimensional structure of the potent toxin II from the scorpion Androctonus australis Hector.</title>
        <authorList>
            <person name="Fontecilla-Camps J.-C."/>
            <person name="Habersetzer-Rochat C."/>
            <person name="Rochat H."/>
        </authorList>
    </citation>
    <scope>CRYSTALLIZATION</scope>
</reference>
<reference evidence="23" key="8">
    <citation type="journal article" date="1994" name="J. Mol. Biol.">
        <title>Crystal structure of toxin II from the scorpion Androctonus australis hector refined at 1.3-A resolution.</title>
        <authorList>
            <person name="Housset D."/>
            <person name="Habersetzer-Rochat C."/>
            <person name="Astier J.-P."/>
            <person name="Fontecilla-Camps J.-C."/>
        </authorList>
    </citation>
    <scope>X-RAY CRYSTALLOGRAPHY (1.3 ANGSTROMS)</scope>
    <source>
        <strain>Hector</strain>
    </source>
</reference>
<reference evidence="22" key="9">
    <citation type="journal article" date="1997" name="Acta Crystallogr. D">
        <title>Ab initio structure determination and refinement of a scorpion protein toxin.</title>
        <authorList>
            <person name="Smith G.D."/>
            <person name="Blessing R.H."/>
            <person name="Ealick S.E."/>
            <person name="Fontecilla-Camps J.-C."/>
            <person name="Hauptman H.A."/>
            <person name="Housset D."/>
            <person name="Langs D.A."/>
            <person name="Miller R."/>
        </authorList>
    </citation>
    <scope>X-RAY CRYSTALLOGRAPHY (0.96 ANGSTROMS)</scope>
    <source>
        <strain>Hector</strain>
    </source>
</reference>
<reference evidence="24" key="10">
    <citation type="journal article" date="2004" name="J. Biol. Chem.">
        <title>Molecular basis of the high insecticidal potency of scorpion alpha-toxins.</title>
        <authorList>
            <person name="Karbat I."/>
            <person name="Frolow F."/>
            <person name="Froy O."/>
            <person name="Gilles N."/>
            <person name="Cohen L."/>
            <person name="Turkov M."/>
            <person name="Gordon D."/>
            <person name="Gurevitz M."/>
        </authorList>
    </citation>
    <scope>X-RAY CRYSTALLOGRAPHY (1.3 ANGSTROMS) OF 20-83 (CHIMERA AAH2/LQH-ALPHA-IT(27-29,36,75-81))</scope>
    <scope>MUTAGENESIS OF 27-ASP--VAL-29; GLY-36 AND 75-ARG--ARG-81</scope>
    <source>
        <strain>Hector</strain>
    </source>
</reference>
<reference evidence="26" key="11">
    <citation type="journal article" date="2019" name="Science">
        <title>Structural basis of alpha-scorpion toxin action on Nav channels.</title>
        <authorList>
            <person name="Clairfeuille T."/>
            <person name="Cloake A."/>
            <person name="Infield D.T."/>
            <person name="Llongueras J.P."/>
            <person name="Arthur C.P."/>
            <person name="Li Z.R."/>
            <person name="Jian Y."/>
            <person name="Martin-Eauclaire M.F."/>
            <person name="Bougis P.E."/>
            <person name="Ciferri C."/>
            <person name="Ahern C.A."/>
            <person name="Bosmans F."/>
            <person name="Hackos D.H."/>
            <person name="Rohou A."/>
            <person name="Payandeh J."/>
        </authorList>
    </citation>
    <scope>STRUCTURE BY ELECTRON MICROSCOPY (3.50 ANGSTROMS) OF 20-83 IN COMPLEX WITH SODIUM CHANNEL</scope>
    <scope>FUNCTION</scope>
    <scope>DISULFIDE BONDS</scope>
    <scope>MUTAGENESIS OF ARG-81 AND HIS-83</scope>
</reference>
<sequence length="85" mass="9548">MNYLVMISLALLFVTGVESVKDGYIVDDVNCTYFCGRNAYCNEECTKLKGESGYCQWASPYGNACYCYKLPDHVRTKGPGRCHGR</sequence>
<evidence type="ECO:0000255" key="1">
    <source>
        <dbReference type="PROSITE-ProRule" id="PRU01210"/>
    </source>
</evidence>
<evidence type="ECO:0000269" key="2">
    <source>
    </source>
</evidence>
<evidence type="ECO:0000269" key="3">
    <source>
    </source>
</evidence>
<evidence type="ECO:0000269" key="4">
    <source>
    </source>
</evidence>
<evidence type="ECO:0000269" key="5">
    <source>
    </source>
</evidence>
<evidence type="ECO:0000269" key="6">
    <source>
    </source>
</evidence>
<evidence type="ECO:0000269" key="7">
    <source>
    </source>
</evidence>
<evidence type="ECO:0000269" key="8">
    <source>
    </source>
</evidence>
<evidence type="ECO:0000269" key="9">
    <source>
    </source>
</evidence>
<evidence type="ECO:0000303" key="10">
    <source>
    </source>
</evidence>
<evidence type="ECO:0000303" key="11">
    <source>
    </source>
</evidence>
<evidence type="ECO:0000303" key="12">
    <source>
    </source>
</evidence>
<evidence type="ECO:0000303" key="13">
    <source>
    </source>
</evidence>
<evidence type="ECO:0000303" key="14">
    <source>
    </source>
</evidence>
<evidence type="ECO:0000303" key="15">
    <source>
    </source>
</evidence>
<evidence type="ECO:0000303" key="16">
    <source>
    </source>
</evidence>
<evidence type="ECO:0000303" key="17">
    <source>
    </source>
</evidence>
<evidence type="ECO:0000303" key="18">
    <source>
    </source>
</evidence>
<evidence type="ECO:0000303" key="19">
    <source>
    </source>
</evidence>
<evidence type="ECO:0000305" key="20"/>
<evidence type="ECO:0000305" key="21">
    <source>
    </source>
</evidence>
<evidence type="ECO:0007744" key="22">
    <source>
        <dbReference type="PDB" id="1AHO"/>
    </source>
</evidence>
<evidence type="ECO:0007744" key="23">
    <source>
        <dbReference type="PDB" id="1PTX"/>
    </source>
</evidence>
<evidence type="ECO:0007744" key="24">
    <source>
        <dbReference type="PDB" id="1SEG"/>
    </source>
</evidence>
<evidence type="ECO:0007744" key="25">
    <source>
        <dbReference type="PDB" id="4AEI"/>
    </source>
</evidence>
<evidence type="ECO:0007744" key="26">
    <source>
        <dbReference type="PDB" id="6NT4"/>
    </source>
</evidence>
<evidence type="ECO:0007829" key="27">
    <source>
        <dbReference type="PDB" id="1AHO"/>
    </source>
</evidence>
<evidence type="ECO:0007829" key="28">
    <source>
        <dbReference type="PDB" id="1SEG"/>
    </source>
</evidence>
<protein>
    <recommendedName>
        <fullName evidence="11">Alpha-mammal toxin AaH2</fullName>
    </recommendedName>
    <alternativeName>
        <fullName evidence="10 13 14 15">AaH II</fullName>
        <shortName>AaHII</shortName>
    </alternativeName>
    <alternativeName>
        <fullName evidence="17">Neurotoxin II</fullName>
        <shortName evidence="12 16 18 19">Toxin II</shortName>
    </alternativeName>
</protein>
<organism>
    <name type="scientific">Androctonus australis</name>
    <name type="common">Sahara scorpion</name>
    <dbReference type="NCBI Taxonomy" id="6858"/>
    <lineage>
        <taxon>Eukaryota</taxon>
        <taxon>Metazoa</taxon>
        <taxon>Ecdysozoa</taxon>
        <taxon>Arthropoda</taxon>
        <taxon>Chelicerata</taxon>
        <taxon>Arachnida</taxon>
        <taxon>Scorpiones</taxon>
        <taxon>Buthida</taxon>
        <taxon>Buthoidea</taxon>
        <taxon>Buthidae</taxon>
        <taxon>Androctonus</taxon>
    </lineage>
</organism>
<dbReference type="EMBL" id="M27704">
    <property type="protein sequence ID" value="AAA29949.1"/>
    <property type="molecule type" value="mRNA"/>
</dbReference>
<dbReference type="PIR" id="D34444">
    <property type="entry name" value="NTSR2A"/>
</dbReference>
<dbReference type="PDB" id="1AHO">
    <property type="method" value="X-ray"/>
    <property type="resolution" value="0.96 A"/>
    <property type="chains" value="A=20-83"/>
</dbReference>
<dbReference type="PDB" id="1PTX">
    <property type="method" value="X-ray"/>
    <property type="resolution" value="1.30 A"/>
    <property type="chains" value="A=20-83"/>
</dbReference>
<dbReference type="PDB" id="1SEG">
    <property type="method" value="X-ray"/>
    <property type="resolution" value="1.30 A"/>
    <property type="chains" value="A=20-83"/>
</dbReference>
<dbReference type="PDB" id="4AEI">
    <property type="method" value="X-ray"/>
    <property type="resolution" value="2.30 A"/>
    <property type="chains" value="A/B/C=20-83"/>
</dbReference>
<dbReference type="PDB" id="6NT4">
    <property type="method" value="EM"/>
    <property type="resolution" value="3.50 A"/>
    <property type="chains" value="B/C=20-83"/>
</dbReference>
<dbReference type="PDBsum" id="1AHO"/>
<dbReference type="PDBsum" id="1PTX"/>
<dbReference type="PDBsum" id="1SEG"/>
<dbReference type="PDBsum" id="4AEI"/>
<dbReference type="PDBsum" id="6NT4"/>
<dbReference type="EMDB" id="EMD-0501"/>
<dbReference type="SMR" id="P01484"/>
<dbReference type="TCDB" id="8.B.1.1.7">
    <property type="family name" value="the long (4c-c) scorpion toxin (l-st) superfamily"/>
</dbReference>
<dbReference type="ABCD" id="P01484">
    <property type="antibodies" value="1 sequenced antibody"/>
</dbReference>
<dbReference type="EvolutionaryTrace" id="P01484"/>
<dbReference type="GO" id="GO:0005576">
    <property type="term" value="C:extracellular region"/>
    <property type="evidence" value="ECO:0007669"/>
    <property type="project" value="UniProtKB-SubCell"/>
</dbReference>
<dbReference type="GO" id="GO:0019871">
    <property type="term" value="F:sodium channel inhibitor activity"/>
    <property type="evidence" value="ECO:0007669"/>
    <property type="project" value="InterPro"/>
</dbReference>
<dbReference type="GO" id="GO:0090729">
    <property type="term" value="F:toxin activity"/>
    <property type="evidence" value="ECO:0007669"/>
    <property type="project" value="UniProtKB-KW"/>
</dbReference>
<dbReference type="GO" id="GO:0006952">
    <property type="term" value="P:defense response"/>
    <property type="evidence" value="ECO:0007669"/>
    <property type="project" value="InterPro"/>
</dbReference>
<dbReference type="CDD" id="cd23106">
    <property type="entry name" value="neurotoxins_LC_scorpion"/>
    <property type="match status" value="1"/>
</dbReference>
<dbReference type="Gene3D" id="3.30.30.10">
    <property type="entry name" value="Knottin, scorpion toxin-like"/>
    <property type="match status" value="1"/>
</dbReference>
<dbReference type="InterPro" id="IPR044062">
    <property type="entry name" value="LCN-type_CS_alpha_beta_dom"/>
</dbReference>
<dbReference type="InterPro" id="IPR003614">
    <property type="entry name" value="Scorpion_toxin-like"/>
</dbReference>
<dbReference type="InterPro" id="IPR036574">
    <property type="entry name" value="Scorpion_toxin-like_sf"/>
</dbReference>
<dbReference type="InterPro" id="IPR018218">
    <property type="entry name" value="Scorpion_toxinL"/>
</dbReference>
<dbReference type="InterPro" id="IPR002061">
    <property type="entry name" value="Scorpion_toxinL/defensin"/>
</dbReference>
<dbReference type="Pfam" id="PF00537">
    <property type="entry name" value="Toxin_3"/>
    <property type="match status" value="1"/>
</dbReference>
<dbReference type="PRINTS" id="PR00285">
    <property type="entry name" value="SCORPNTOXIN"/>
</dbReference>
<dbReference type="PRINTS" id="PR00284">
    <property type="entry name" value="TOXIN"/>
</dbReference>
<dbReference type="SMART" id="SM00505">
    <property type="entry name" value="Knot1"/>
    <property type="match status" value="1"/>
</dbReference>
<dbReference type="SUPFAM" id="SSF57095">
    <property type="entry name" value="Scorpion toxin-like"/>
    <property type="match status" value="1"/>
</dbReference>
<dbReference type="PROSITE" id="PS51863">
    <property type="entry name" value="LCN_CSAB"/>
    <property type="match status" value="1"/>
</dbReference>